<name>UPPP_MYCLE</name>
<accession>Q9CC42</accession>
<accession>Q49783</accession>
<accession>Q49788</accession>
<dbReference type="EC" id="3.6.1.27" evidence="1"/>
<dbReference type="EMBL" id="U00017">
    <property type="protein sequence ID" value="AAA17200.1"/>
    <property type="status" value="ALT_FRAME"/>
    <property type="molecule type" value="Genomic_DNA"/>
</dbReference>
<dbReference type="EMBL" id="U00017">
    <property type="protein sequence ID" value="AAA17193.1"/>
    <property type="status" value="ALT_FRAME"/>
    <property type="molecule type" value="Genomic_DNA"/>
</dbReference>
<dbReference type="EMBL" id="AL583921">
    <property type="protein sequence ID" value="CAC31678.1"/>
    <property type="molecule type" value="Genomic_DNA"/>
</dbReference>
<dbReference type="PIR" id="C87071">
    <property type="entry name" value="C87071"/>
</dbReference>
<dbReference type="PIR" id="S72853">
    <property type="entry name" value="S72853"/>
</dbReference>
<dbReference type="PIR" id="S72860">
    <property type="entry name" value="S72860"/>
</dbReference>
<dbReference type="RefSeq" id="NP_301931.1">
    <property type="nucleotide sequence ID" value="NC_002677.1"/>
</dbReference>
<dbReference type="SMR" id="Q9CC42"/>
<dbReference type="STRING" id="272631.gene:17575131"/>
<dbReference type="KEGG" id="mle:ML1297"/>
<dbReference type="PATRIC" id="fig|272631.5.peg.2399"/>
<dbReference type="Leproma" id="ML1297"/>
<dbReference type="eggNOG" id="COG1968">
    <property type="taxonomic scope" value="Bacteria"/>
</dbReference>
<dbReference type="HOGENOM" id="CLU_060296_1_0_11"/>
<dbReference type="OrthoDB" id="9808289at2"/>
<dbReference type="Proteomes" id="UP000000806">
    <property type="component" value="Chromosome"/>
</dbReference>
<dbReference type="GO" id="GO:0005886">
    <property type="term" value="C:plasma membrane"/>
    <property type="evidence" value="ECO:0007669"/>
    <property type="project" value="UniProtKB-SubCell"/>
</dbReference>
<dbReference type="GO" id="GO:0050380">
    <property type="term" value="F:undecaprenyl-diphosphatase activity"/>
    <property type="evidence" value="ECO:0007669"/>
    <property type="project" value="UniProtKB-UniRule"/>
</dbReference>
<dbReference type="GO" id="GO:0071555">
    <property type="term" value="P:cell wall organization"/>
    <property type="evidence" value="ECO:0007669"/>
    <property type="project" value="UniProtKB-KW"/>
</dbReference>
<dbReference type="GO" id="GO:0009252">
    <property type="term" value="P:peptidoglycan biosynthetic process"/>
    <property type="evidence" value="ECO:0007669"/>
    <property type="project" value="UniProtKB-KW"/>
</dbReference>
<dbReference type="GO" id="GO:0008360">
    <property type="term" value="P:regulation of cell shape"/>
    <property type="evidence" value="ECO:0007669"/>
    <property type="project" value="UniProtKB-KW"/>
</dbReference>
<dbReference type="GO" id="GO:0046677">
    <property type="term" value="P:response to antibiotic"/>
    <property type="evidence" value="ECO:0007669"/>
    <property type="project" value="UniProtKB-UniRule"/>
</dbReference>
<dbReference type="HAMAP" id="MF_01006">
    <property type="entry name" value="Undec_diphosphatase"/>
    <property type="match status" value="1"/>
</dbReference>
<dbReference type="InterPro" id="IPR003824">
    <property type="entry name" value="UppP"/>
</dbReference>
<dbReference type="NCBIfam" id="NF001392">
    <property type="entry name" value="PRK00281.2-1"/>
    <property type="match status" value="1"/>
</dbReference>
<dbReference type="NCBIfam" id="TIGR00753">
    <property type="entry name" value="undec_PP_bacA"/>
    <property type="match status" value="1"/>
</dbReference>
<dbReference type="PANTHER" id="PTHR30622">
    <property type="entry name" value="UNDECAPRENYL-DIPHOSPHATASE"/>
    <property type="match status" value="1"/>
</dbReference>
<dbReference type="PANTHER" id="PTHR30622:SF4">
    <property type="entry name" value="UNDECAPRENYL-DIPHOSPHATASE"/>
    <property type="match status" value="1"/>
</dbReference>
<dbReference type="Pfam" id="PF02673">
    <property type="entry name" value="BacA"/>
    <property type="match status" value="1"/>
</dbReference>
<gene>
    <name evidence="1" type="primary">uppP</name>
    <name type="synonym">bacA</name>
    <name type="synonym">upk</name>
    <name type="ordered locus">ML1297</name>
    <name type="ORF">B2126_C2_190/B2126_C3_227</name>
</gene>
<reference key="1">
    <citation type="submission" date="1994-03" db="EMBL/GenBank/DDBJ databases">
        <authorList>
            <person name="Smith D.R."/>
            <person name="Robison K."/>
        </authorList>
    </citation>
    <scope>NUCLEOTIDE SEQUENCE [GENOMIC DNA]</scope>
</reference>
<reference key="2">
    <citation type="journal article" date="2001" name="Nature">
        <title>Massive gene decay in the leprosy bacillus.</title>
        <authorList>
            <person name="Cole S.T."/>
            <person name="Eiglmeier K."/>
            <person name="Parkhill J."/>
            <person name="James K.D."/>
            <person name="Thomson N.R."/>
            <person name="Wheeler P.R."/>
            <person name="Honore N."/>
            <person name="Garnier T."/>
            <person name="Churcher C.M."/>
            <person name="Harris D.E."/>
            <person name="Mungall K.L."/>
            <person name="Basham D."/>
            <person name="Brown D."/>
            <person name="Chillingworth T."/>
            <person name="Connor R."/>
            <person name="Davies R.M."/>
            <person name="Devlin K."/>
            <person name="Duthoy S."/>
            <person name="Feltwell T."/>
            <person name="Fraser A."/>
            <person name="Hamlin N."/>
            <person name="Holroyd S."/>
            <person name="Hornsby T."/>
            <person name="Jagels K."/>
            <person name="Lacroix C."/>
            <person name="Maclean J."/>
            <person name="Moule S."/>
            <person name="Murphy L.D."/>
            <person name="Oliver K."/>
            <person name="Quail M.A."/>
            <person name="Rajandream M.A."/>
            <person name="Rutherford K.M."/>
            <person name="Rutter S."/>
            <person name="Seeger K."/>
            <person name="Simon S."/>
            <person name="Simmonds M."/>
            <person name="Skelton J."/>
            <person name="Squares R."/>
            <person name="Squares S."/>
            <person name="Stevens K."/>
            <person name="Taylor K."/>
            <person name="Whitehead S."/>
            <person name="Woodward J.R."/>
            <person name="Barrell B.G."/>
        </authorList>
    </citation>
    <scope>NUCLEOTIDE SEQUENCE [LARGE SCALE GENOMIC DNA]</scope>
    <source>
        <strain>TN</strain>
    </source>
</reference>
<proteinExistence type="inferred from homology"/>
<comment type="function">
    <text evidence="1">Catalyzes the dephosphorylation of undecaprenyl diphosphate (UPP). Confers resistance to bacitracin.</text>
</comment>
<comment type="catalytic activity">
    <reaction evidence="1">
        <text>di-trans,octa-cis-undecaprenyl diphosphate + H2O = di-trans,octa-cis-undecaprenyl phosphate + phosphate + H(+)</text>
        <dbReference type="Rhea" id="RHEA:28094"/>
        <dbReference type="ChEBI" id="CHEBI:15377"/>
        <dbReference type="ChEBI" id="CHEBI:15378"/>
        <dbReference type="ChEBI" id="CHEBI:43474"/>
        <dbReference type="ChEBI" id="CHEBI:58405"/>
        <dbReference type="ChEBI" id="CHEBI:60392"/>
        <dbReference type="EC" id="3.6.1.27"/>
    </reaction>
</comment>
<comment type="subcellular location">
    <subcellularLocation>
        <location evidence="1">Cell membrane</location>
        <topology evidence="1">Multi-pass membrane protein</topology>
    </subcellularLocation>
</comment>
<comment type="miscellaneous">
    <text>Bacitracin is thought to be involved in the inhibition of peptidoglycan synthesis by sequestering undecaprenyl diphosphate, thereby reducing the pool of lipid carrier available.</text>
</comment>
<comment type="similarity">
    <text evidence="1">Belongs to the UppP family.</text>
</comment>
<comment type="sequence caution" evidence="2">
    <conflict type="frameshift">
        <sequence resource="EMBL-CDS" id="AAA17193"/>
    </conflict>
</comment>
<keyword id="KW-0046">Antibiotic resistance</keyword>
<keyword id="KW-1003">Cell membrane</keyword>
<keyword id="KW-0133">Cell shape</keyword>
<keyword id="KW-0961">Cell wall biogenesis/degradation</keyword>
<keyword id="KW-0378">Hydrolase</keyword>
<keyword id="KW-0472">Membrane</keyword>
<keyword id="KW-0573">Peptidoglycan synthesis</keyword>
<keyword id="KW-1185">Reference proteome</keyword>
<keyword id="KW-0812">Transmembrane</keyword>
<keyword id="KW-1133">Transmembrane helix</keyword>
<protein>
    <recommendedName>
        <fullName evidence="1">Undecaprenyl-diphosphatase</fullName>
        <ecNumber evidence="1">3.6.1.27</ecNumber>
    </recommendedName>
    <alternativeName>
        <fullName evidence="1">Bacitracin resistance protein</fullName>
    </alternativeName>
    <alternativeName>
        <fullName evidence="1">Undecaprenyl pyrophosphate phosphatase</fullName>
    </alternativeName>
</protein>
<feature type="chain" id="PRO_0000151164" description="Undecaprenyl-diphosphatase">
    <location>
        <begin position="1"/>
        <end position="282"/>
    </location>
</feature>
<feature type="transmembrane region" description="Helical" evidence="1">
    <location>
        <begin position="90"/>
        <end position="110"/>
    </location>
</feature>
<feature type="transmembrane region" description="Helical" evidence="1">
    <location>
        <begin position="121"/>
        <end position="141"/>
    </location>
</feature>
<feature type="transmembrane region" description="Helical" evidence="1">
    <location>
        <begin position="165"/>
        <end position="185"/>
    </location>
</feature>
<feature type="transmembrane region" description="Helical" evidence="1">
    <location>
        <begin position="194"/>
        <end position="214"/>
    </location>
</feature>
<feature type="transmembrane region" description="Helical" evidence="1">
    <location>
        <begin position="228"/>
        <end position="248"/>
    </location>
</feature>
<feature type="transmembrane region" description="Helical" evidence="1">
    <location>
        <begin position="256"/>
        <end position="276"/>
    </location>
</feature>
<feature type="sequence conflict" description="In Ref. 1; AAA17193." evidence="2" ref="1">
    <original>S</original>
    <variation>P</variation>
    <location>
        <position position="116"/>
    </location>
</feature>
<evidence type="ECO:0000255" key="1">
    <source>
        <dbReference type="HAMAP-Rule" id="MF_01006"/>
    </source>
</evidence>
<evidence type="ECO:0000305" key="2"/>
<organism>
    <name type="scientific">Mycobacterium leprae (strain TN)</name>
    <dbReference type="NCBI Taxonomy" id="272631"/>
    <lineage>
        <taxon>Bacteria</taxon>
        <taxon>Bacillati</taxon>
        <taxon>Actinomycetota</taxon>
        <taxon>Actinomycetes</taxon>
        <taxon>Mycobacteriales</taxon>
        <taxon>Mycobacteriaceae</taxon>
        <taxon>Mycobacterium</taxon>
    </lineage>
</organism>
<sequence>MTAVSAMSWWQVIVLAVVQGLTEFLPVSSSGHLAIVSRILFTGDAGASFTAVSQLGTEVAVLVYFGRDIVRILHAWCRGLTVTLHRTADYWLGWYVIIGTIPICILGLVCKDEIRSGIRPLWVVATALVAFSGVIAFAEYVGRQNRCIEQLNWRDALVVGVAQTLALIPGVSRSGSTISAGLFLGLDRELAARFGFLLAIPAVFASGLFSIPDAFHPITEGMSATGAQLLVATVIAFVVGLVAVSWLLRFLVQHNLYWFVGYRIVVGVGVLILLAVKTVAAT</sequence>